<sequence>MDSSGGAYLNVDAIWSKVGFVRLLQMLFGCTTFSLVLHRAGFSAAYGTFCVFVWAFCFALTILIVTCELTRLQSCLRSISWGNFTAAYAMLATLMTLTAAVIYPMYFTSLNCSSSDCSTKYFRLAVSVCAALLFVTYAVEVFLTRAKPGQPCSYMATASGLLKVVQAFVACVIFGALASESQYKKFVATQWCVAVYSFCFGVTMVVVILNITGRALSLCCPFERFVVIYTVLAILMYISAAVIWPVYFFDSKYGSAKRPSRCTWGQCPWDSQLAVTIFTHINLILYIADLIYTQRLRIVAQR</sequence>
<evidence type="ECO:0000255" key="1"/>
<evidence type="ECO:0000255" key="2">
    <source>
        <dbReference type="PROSITE-ProRule" id="PRU00581"/>
    </source>
</evidence>
<evidence type="ECO:0000305" key="3"/>
<accession>Q5XGR0</accession>
<feature type="chain" id="PRO_0000332208" description="Myeloid-associated differentiation marker-like protein 2">
    <location>
        <begin position="1"/>
        <end position="302"/>
    </location>
</feature>
<feature type="transmembrane region" description="Helical" evidence="1">
    <location>
        <begin position="45"/>
        <end position="65"/>
    </location>
</feature>
<feature type="transmembrane region" description="Helical" evidence="1">
    <location>
        <begin position="87"/>
        <end position="107"/>
    </location>
</feature>
<feature type="transmembrane region" description="Helical" evidence="1">
    <location>
        <begin position="124"/>
        <end position="144"/>
    </location>
</feature>
<feature type="transmembrane region" description="Helical" evidence="1">
    <location>
        <begin position="158"/>
        <end position="178"/>
    </location>
</feature>
<feature type="transmembrane region" description="Helical" evidence="1">
    <location>
        <begin position="191"/>
        <end position="211"/>
    </location>
</feature>
<feature type="transmembrane region" description="Helical" evidence="1">
    <location>
        <begin position="225"/>
        <end position="245"/>
    </location>
</feature>
<feature type="transmembrane region" description="Helical" evidence="1">
    <location>
        <begin position="273"/>
        <end position="293"/>
    </location>
</feature>
<feature type="domain" description="MARVEL 1" evidence="2">
    <location>
        <begin position="13"/>
        <end position="149"/>
    </location>
</feature>
<feature type="domain" description="MARVEL 2" evidence="2">
    <location>
        <begin position="154"/>
        <end position="298"/>
    </location>
</feature>
<name>MADL2_XENLA</name>
<reference key="1">
    <citation type="submission" date="2004-10" db="EMBL/GenBank/DDBJ databases">
        <authorList>
            <consortium name="NIH - Xenopus Gene Collection (XGC) project"/>
        </authorList>
    </citation>
    <scope>NUCLEOTIDE SEQUENCE [LARGE SCALE MRNA]</scope>
</reference>
<dbReference type="EMBL" id="BC084372">
    <property type="protein sequence ID" value="AAH84372.1"/>
    <property type="molecule type" value="mRNA"/>
</dbReference>
<dbReference type="RefSeq" id="NP_001088324.1">
    <property type="nucleotide sequence ID" value="NM_001094855.1"/>
</dbReference>
<dbReference type="DNASU" id="495162"/>
<dbReference type="GeneID" id="495162"/>
<dbReference type="KEGG" id="xla:495162"/>
<dbReference type="AGR" id="Xenbase:XB-GENE-967757"/>
<dbReference type="CTD" id="495162"/>
<dbReference type="Xenbase" id="XB-GENE-967757">
    <property type="gene designation" value="myadml2.L"/>
</dbReference>
<dbReference type="OrthoDB" id="8737882at2759"/>
<dbReference type="Proteomes" id="UP000186698">
    <property type="component" value="Chromosome 9_10L"/>
</dbReference>
<dbReference type="Bgee" id="495162">
    <property type="expression patterns" value="Expressed in muscle tissue and 4 other cell types or tissues"/>
</dbReference>
<dbReference type="GO" id="GO:0016020">
    <property type="term" value="C:membrane"/>
    <property type="evidence" value="ECO:0007669"/>
    <property type="project" value="UniProtKB-SubCell"/>
</dbReference>
<dbReference type="InterPro" id="IPR008253">
    <property type="entry name" value="Marvel"/>
</dbReference>
<dbReference type="InterPro" id="IPR047123">
    <property type="entry name" value="MYADM-like"/>
</dbReference>
<dbReference type="PANTHER" id="PTHR17068">
    <property type="entry name" value="MYELOID-ASSOCIATED DIFFERENTIATION MARKER MYADM FAMILY MEMBER"/>
    <property type="match status" value="1"/>
</dbReference>
<dbReference type="PANTHER" id="PTHR17068:SF5">
    <property type="entry name" value="MYELOID-ASSOCIATED DIFFERENTIATION MARKER-LIKE PROTEIN 2"/>
    <property type="match status" value="1"/>
</dbReference>
<dbReference type="Pfam" id="PF01284">
    <property type="entry name" value="MARVEL"/>
    <property type="match status" value="2"/>
</dbReference>
<dbReference type="PROSITE" id="PS51225">
    <property type="entry name" value="MARVEL"/>
    <property type="match status" value="2"/>
</dbReference>
<gene>
    <name type="primary">myadml2</name>
</gene>
<protein>
    <recommendedName>
        <fullName>Myeloid-associated differentiation marker-like protein 2</fullName>
    </recommendedName>
</protein>
<comment type="subcellular location">
    <subcellularLocation>
        <location evidence="3">Membrane</location>
        <topology evidence="3">Multi-pass membrane protein</topology>
    </subcellularLocation>
</comment>
<comment type="similarity">
    <text evidence="3">Belongs to the MAL family.</text>
</comment>
<keyword id="KW-0472">Membrane</keyword>
<keyword id="KW-1185">Reference proteome</keyword>
<keyword id="KW-0677">Repeat</keyword>
<keyword id="KW-0812">Transmembrane</keyword>
<keyword id="KW-1133">Transmembrane helix</keyword>
<organism>
    <name type="scientific">Xenopus laevis</name>
    <name type="common">African clawed frog</name>
    <dbReference type="NCBI Taxonomy" id="8355"/>
    <lineage>
        <taxon>Eukaryota</taxon>
        <taxon>Metazoa</taxon>
        <taxon>Chordata</taxon>
        <taxon>Craniata</taxon>
        <taxon>Vertebrata</taxon>
        <taxon>Euteleostomi</taxon>
        <taxon>Amphibia</taxon>
        <taxon>Batrachia</taxon>
        <taxon>Anura</taxon>
        <taxon>Pipoidea</taxon>
        <taxon>Pipidae</taxon>
        <taxon>Xenopodinae</taxon>
        <taxon>Xenopus</taxon>
        <taxon>Xenopus</taxon>
    </lineage>
</organism>
<proteinExistence type="evidence at transcript level"/>